<gene>
    <name evidence="1" type="primary">psbN</name>
</gene>
<protein>
    <recommendedName>
        <fullName evidence="1">Protein PsbN</fullName>
    </recommendedName>
</protein>
<proteinExistence type="inferred from homology"/>
<dbReference type="EMBL" id="AY122283">
    <property type="protein sequence ID" value="AAM88463.1"/>
    <property type="molecule type" value="Genomic_DNA"/>
</dbReference>
<dbReference type="SMR" id="Q7YMA2"/>
<dbReference type="GO" id="GO:0009535">
    <property type="term" value="C:chloroplast thylakoid membrane"/>
    <property type="evidence" value="ECO:0007669"/>
    <property type="project" value="UniProtKB-SubCell"/>
</dbReference>
<dbReference type="GO" id="GO:0015979">
    <property type="term" value="P:photosynthesis"/>
    <property type="evidence" value="ECO:0007669"/>
    <property type="project" value="InterPro"/>
</dbReference>
<dbReference type="HAMAP" id="MF_00293">
    <property type="entry name" value="PSII_PsbN"/>
    <property type="match status" value="1"/>
</dbReference>
<dbReference type="InterPro" id="IPR003398">
    <property type="entry name" value="PSII_PsbN"/>
</dbReference>
<dbReference type="PANTHER" id="PTHR35326">
    <property type="entry name" value="PROTEIN PSBN"/>
    <property type="match status" value="1"/>
</dbReference>
<dbReference type="PANTHER" id="PTHR35326:SF3">
    <property type="entry name" value="PROTEIN PSBN"/>
    <property type="match status" value="1"/>
</dbReference>
<dbReference type="Pfam" id="PF02468">
    <property type="entry name" value="PsbN"/>
    <property type="match status" value="1"/>
</dbReference>
<evidence type="ECO:0000255" key="1">
    <source>
        <dbReference type="HAMAP-Rule" id="MF_00293"/>
    </source>
</evidence>
<comment type="function">
    <text evidence="1">May play a role in photosystem I and II biogenesis.</text>
</comment>
<comment type="subcellular location">
    <subcellularLocation>
        <location evidence="1">Plastid</location>
        <location evidence="1">Chloroplast thylakoid membrane</location>
        <topology evidence="1">Single-pass membrane protein</topology>
    </subcellularLocation>
</comment>
<comment type="similarity">
    <text evidence="1">Belongs to the PsbN family.</text>
</comment>
<comment type="caution">
    <text evidence="1">Originally thought to be a component of PSII; based on experiments in Synechocystis, N.tabacum and barley, and its absence from PSII in T.elongatus and T.vulcanus, this is probably not true.</text>
</comment>
<reference key="1">
    <citation type="submission" date="2002-06" db="EMBL/GenBank/DDBJ databases">
        <title>Evolution of the Meteoriaceae.</title>
        <authorList>
            <person name="Quandt D."/>
        </authorList>
    </citation>
    <scope>NUCLEOTIDE SEQUENCE [GENOMIC DNA]</scope>
</reference>
<sequence>METATLVAIFISCSLVSFTGYALYTAFGQPSKELRDPFEEHED</sequence>
<geneLocation type="chloroplast"/>
<name>PSBN_EXSCR</name>
<keyword id="KW-0150">Chloroplast</keyword>
<keyword id="KW-0472">Membrane</keyword>
<keyword id="KW-0934">Plastid</keyword>
<keyword id="KW-0793">Thylakoid</keyword>
<keyword id="KW-0812">Transmembrane</keyword>
<keyword id="KW-1133">Transmembrane helix</keyword>
<accession>Q7YMA2</accession>
<feature type="chain" id="PRO_0000207926" description="Protein PsbN">
    <location>
        <begin position="1"/>
        <end position="43"/>
    </location>
</feature>
<feature type="transmembrane region" description="Helical" evidence="1">
    <location>
        <begin position="5"/>
        <end position="27"/>
    </location>
</feature>
<organism>
    <name type="scientific">Exsertotheca crispa</name>
    <name type="common">Moss</name>
    <name type="synonym">Neckera crispa</name>
    <dbReference type="NCBI Taxonomy" id="103981"/>
    <lineage>
        <taxon>Eukaryota</taxon>
        <taxon>Viridiplantae</taxon>
        <taxon>Streptophyta</taxon>
        <taxon>Embryophyta</taxon>
        <taxon>Bryophyta</taxon>
        <taxon>Bryophytina</taxon>
        <taxon>Bryopsida</taxon>
        <taxon>Bryidae</taxon>
        <taxon>Hypnanae</taxon>
        <taxon>Hypnales</taxon>
        <taxon>Neckeraceae</taxon>
        <taxon>Exsertotheca</taxon>
    </lineage>
</organism>